<comment type="function">
    <text evidence="1">Catalyzes the reversible phosphorylation of UMP to UDP.</text>
</comment>
<comment type="catalytic activity">
    <reaction evidence="1">
        <text>UMP + ATP = UDP + ADP</text>
        <dbReference type="Rhea" id="RHEA:24400"/>
        <dbReference type="ChEBI" id="CHEBI:30616"/>
        <dbReference type="ChEBI" id="CHEBI:57865"/>
        <dbReference type="ChEBI" id="CHEBI:58223"/>
        <dbReference type="ChEBI" id="CHEBI:456216"/>
        <dbReference type="EC" id="2.7.4.22"/>
    </reaction>
</comment>
<comment type="activity regulation">
    <text evidence="1">Inhibited by UTP.</text>
</comment>
<comment type="pathway">
    <text evidence="1">Pyrimidine metabolism; CTP biosynthesis via de novo pathway; UDP from UMP (UMPK route): step 1/1.</text>
</comment>
<comment type="subunit">
    <text evidence="1">Homohexamer.</text>
</comment>
<comment type="subcellular location">
    <subcellularLocation>
        <location evidence="1">Cytoplasm</location>
    </subcellularLocation>
</comment>
<comment type="similarity">
    <text evidence="1">Belongs to the UMP kinase family.</text>
</comment>
<protein>
    <recommendedName>
        <fullName evidence="1">Uridylate kinase</fullName>
        <shortName evidence="1">UK</shortName>
        <ecNumber evidence="1">2.7.4.22</ecNumber>
    </recommendedName>
    <alternativeName>
        <fullName evidence="1">Uridine monophosphate kinase</fullName>
        <shortName evidence="1">UMP kinase</shortName>
        <shortName evidence="1">UMPK</shortName>
    </alternativeName>
</protein>
<organism>
    <name type="scientific">Oleidesulfovibrio alaskensis (strain ATCC BAA-1058 / DSM 17464 / G20)</name>
    <name type="common">Desulfovibrio alaskensis</name>
    <dbReference type="NCBI Taxonomy" id="207559"/>
    <lineage>
        <taxon>Bacteria</taxon>
        <taxon>Pseudomonadati</taxon>
        <taxon>Thermodesulfobacteriota</taxon>
        <taxon>Desulfovibrionia</taxon>
        <taxon>Desulfovibrionales</taxon>
        <taxon>Desulfovibrionaceae</taxon>
        <taxon>Oleidesulfovibrio</taxon>
    </lineage>
</organism>
<reference key="1">
    <citation type="journal article" date="2011" name="J. Bacteriol.">
        <title>Complete genome sequence and updated annotation of Desulfovibrio alaskensis G20.</title>
        <authorList>
            <person name="Hauser L.J."/>
            <person name="Land M.L."/>
            <person name="Brown S.D."/>
            <person name="Larimer F."/>
            <person name="Keller K.L."/>
            <person name="Rapp-Giles B.J."/>
            <person name="Price M.N."/>
            <person name="Lin M."/>
            <person name="Bruce D.C."/>
            <person name="Detter J.C."/>
            <person name="Tapia R."/>
            <person name="Han C.S."/>
            <person name="Goodwin L.A."/>
            <person name="Cheng J.F."/>
            <person name="Pitluck S."/>
            <person name="Copeland A."/>
            <person name="Lucas S."/>
            <person name="Nolan M."/>
            <person name="Lapidus A.L."/>
            <person name="Palumbo A.V."/>
            <person name="Wall J.D."/>
        </authorList>
    </citation>
    <scope>NUCLEOTIDE SEQUENCE [LARGE SCALE GENOMIC DNA]</scope>
    <source>
        <strain>ATCC BAA-1058 / DSM 17464 / G20</strain>
    </source>
</reference>
<feature type="chain" id="PRO_0000323837" description="Uridylate kinase">
    <location>
        <begin position="1"/>
        <end position="238"/>
    </location>
</feature>
<feature type="binding site" evidence="1">
    <location>
        <begin position="12"/>
        <end position="15"/>
    </location>
    <ligand>
        <name>ATP</name>
        <dbReference type="ChEBI" id="CHEBI:30616"/>
    </ligand>
</feature>
<feature type="binding site" evidence="1">
    <location>
        <position position="54"/>
    </location>
    <ligand>
        <name>UMP</name>
        <dbReference type="ChEBI" id="CHEBI:57865"/>
    </ligand>
</feature>
<feature type="binding site" evidence="1">
    <location>
        <position position="55"/>
    </location>
    <ligand>
        <name>ATP</name>
        <dbReference type="ChEBI" id="CHEBI:30616"/>
    </ligand>
</feature>
<feature type="binding site" evidence="1">
    <location>
        <position position="59"/>
    </location>
    <ligand>
        <name>ATP</name>
        <dbReference type="ChEBI" id="CHEBI:30616"/>
    </ligand>
</feature>
<feature type="binding site" evidence="1">
    <location>
        <position position="74"/>
    </location>
    <ligand>
        <name>UMP</name>
        <dbReference type="ChEBI" id="CHEBI:57865"/>
    </ligand>
</feature>
<feature type="binding site" evidence="1">
    <location>
        <begin position="135"/>
        <end position="142"/>
    </location>
    <ligand>
        <name>UMP</name>
        <dbReference type="ChEBI" id="CHEBI:57865"/>
    </ligand>
</feature>
<feature type="binding site" evidence="1">
    <location>
        <position position="162"/>
    </location>
    <ligand>
        <name>ATP</name>
        <dbReference type="ChEBI" id="CHEBI:30616"/>
    </ligand>
</feature>
<feature type="binding site" evidence="1">
    <location>
        <position position="168"/>
    </location>
    <ligand>
        <name>ATP</name>
        <dbReference type="ChEBI" id="CHEBI:30616"/>
    </ligand>
</feature>
<feature type="binding site" evidence="1">
    <location>
        <position position="171"/>
    </location>
    <ligand>
        <name>ATP</name>
        <dbReference type="ChEBI" id="CHEBI:30616"/>
    </ligand>
</feature>
<name>PYRH_OLEA2</name>
<dbReference type="EC" id="2.7.4.22" evidence="1"/>
<dbReference type="EMBL" id="CP000112">
    <property type="protein sequence ID" value="ABB37930.1"/>
    <property type="molecule type" value="Genomic_DNA"/>
</dbReference>
<dbReference type="RefSeq" id="WP_011367156.1">
    <property type="nucleotide sequence ID" value="NC_007519.1"/>
</dbReference>
<dbReference type="SMR" id="Q313G6"/>
<dbReference type="STRING" id="207559.Dde_1129"/>
<dbReference type="KEGG" id="dde:Dde_1129"/>
<dbReference type="eggNOG" id="COG0528">
    <property type="taxonomic scope" value="Bacteria"/>
</dbReference>
<dbReference type="HOGENOM" id="CLU_033861_0_0_7"/>
<dbReference type="UniPathway" id="UPA00159">
    <property type="reaction ID" value="UER00275"/>
</dbReference>
<dbReference type="Proteomes" id="UP000002710">
    <property type="component" value="Chromosome"/>
</dbReference>
<dbReference type="GO" id="GO:0005737">
    <property type="term" value="C:cytoplasm"/>
    <property type="evidence" value="ECO:0007669"/>
    <property type="project" value="UniProtKB-SubCell"/>
</dbReference>
<dbReference type="GO" id="GO:0005524">
    <property type="term" value="F:ATP binding"/>
    <property type="evidence" value="ECO:0007669"/>
    <property type="project" value="UniProtKB-KW"/>
</dbReference>
<dbReference type="GO" id="GO:0033862">
    <property type="term" value="F:UMP kinase activity"/>
    <property type="evidence" value="ECO:0007669"/>
    <property type="project" value="UniProtKB-EC"/>
</dbReference>
<dbReference type="GO" id="GO:0044210">
    <property type="term" value="P:'de novo' CTP biosynthetic process"/>
    <property type="evidence" value="ECO:0007669"/>
    <property type="project" value="UniProtKB-UniRule"/>
</dbReference>
<dbReference type="GO" id="GO:0006225">
    <property type="term" value="P:UDP biosynthetic process"/>
    <property type="evidence" value="ECO:0007669"/>
    <property type="project" value="TreeGrafter"/>
</dbReference>
<dbReference type="CDD" id="cd04254">
    <property type="entry name" value="AAK_UMPK-PyrH-Ec"/>
    <property type="match status" value="1"/>
</dbReference>
<dbReference type="FunFam" id="3.40.1160.10:FF:000001">
    <property type="entry name" value="Uridylate kinase"/>
    <property type="match status" value="1"/>
</dbReference>
<dbReference type="Gene3D" id="3.40.1160.10">
    <property type="entry name" value="Acetylglutamate kinase-like"/>
    <property type="match status" value="1"/>
</dbReference>
<dbReference type="HAMAP" id="MF_01220_B">
    <property type="entry name" value="PyrH_B"/>
    <property type="match status" value="1"/>
</dbReference>
<dbReference type="InterPro" id="IPR036393">
    <property type="entry name" value="AceGlu_kinase-like_sf"/>
</dbReference>
<dbReference type="InterPro" id="IPR001048">
    <property type="entry name" value="Asp/Glu/Uridylate_kinase"/>
</dbReference>
<dbReference type="InterPro" id="IPR011817">
    <property type="entry name" value="Uridylate_kinase"/>
</dbReference>
<dbReference type="InterPro" id="IPR015963">
    <property type="entry name" value="Uridylate_kinase_bac"/>
</dbReference>
<dbReference type="NCBIfam" id="TIGR02075">
    <property type="entry name" value="pyrH_bact"/>
    <property type="match status" value="1"/>
</dbReference>
<dbReference type="PANTHER" id="PTHR42833">
    <property type="entry name" value="URIDYLATE KINASE"/>
    <property type="match status" value="1"/>
</dbReference>
<dbReference type="PANTHER" id="PTHR42833:SF4">
    <property type="entry name" value="URIDYLATE KINASE PUMPKIN, CHLOROPLASTIC"/>
    <property type="match status" value="1"/>
</dbReference>
<dbReference type="Pfam" id="PF00696">
    <property type="entry name" value="AA_kinase"/>
    <property type="match status" value="1"/>
</dbReference>
<dbReference type="PIRSF" id="PIRSF005650">
    <property type="entry name" value="Uridylate_kin"/>
    <property type="match status" value="1"/>
</dbReference>
<dbReference type="SUPFAM" id="SSF53633">
    <property type="entry name" value="Carbamate kinase-like"/>
    <property type="match status" value="1"/>
</dbReference>
<proteinExistence type="inferred from homology"/>
<gene>
    <name evidence="1" type="primary">pyrH</name>
    <name type="ordered locus">Dde_1129</name>
</gene>
<accession>Q313G6</accession>
<keyword id="KW-0067">ATP-binding</keyword>
<keyword id="KW-0963">Cytoplasm</keyword>
<keyword id="KW-0418">Kinase</keyword>
<keyword id="KW-0547">Nucleotide-binding</keyword>
<keyword id="KW-0665">Pyrimidine biosynthesis</keyword>
<keyword id="KW-1185">Reference proteome</keyword>
<keyword id="KW-0808">Transferase</keyword>
<evidence type="ECO:0000255" key="1">
    <source>
        <dbReference type="HAMAP-Rule" id="MF_01220"/>
    </source>
</evidence>
<sequence>MSELKYKRALIKLSGEALAGDKKFGIDPETVSNICREIAEVLEMGLQVSLVIGGGNIFRGLSSSAKGMDRSSADYMGMLATVLNAVAVQDALEKLGHATRVLSAITMQEVCEPYIRRRAERHLEKGRVVICAAGTGNPYFTTDTAAALRGMELKCDVIIKATKVDGVYDKDPMQHDDAVMYRQLSYIEVLQKNLRVMDSTAISLCMENNVPIIVCNMYKGGIKRAVMGEDVGTIVQGG</sequence>